<feature type="chain" id="PRO_0000133700" description="Probable WRKY transcription factor 59">
    <location>
        <begin position="1"/>
        <end position="202"/>
    </location>
</feature>
<feature type="DNA-binding region" description="WRKY" evidence="2">
    <location>
        <begin position="103"/>
        <end position="168"/>
    </location>
</feature>
<feature type="sequence conflict" description="In Ref. 1; AAL50786." evidence="3" ref="1">
    <original>A</original>
    <variation>G</variation>
    <location>
        <position position="56"/>
    </location>
</feature>
<feature type="sequence conflict" description="In Ref. 1; AAL50786." evidence="3" ref="1">
    <location>
        <position position="100"/>
    </location>
</feature>
<feature type="sequence conflict" description="In Ref. 1; AAL50786." evidence="3" ref="1">
    <original>R</original>
    <variation>Q</variation>
    <location>
        <position position="162"/>
    </location>
</feature>
<feature type="sequence conflict" description="In Ref. 1; AAL50786." evidence="3" ref="1">
    <original>L</original>
    <variation>LI</variation>
    <location>
        <position position="183"/>
    </location>
</feature>
<name>WRK59_ARATH</name>
<evidence type="ECO:0000250" key="1"/>
<evidence type="ECO:0000255" key="2">
    <source>
        <dbReference type="PROSITE-ProRule" id="PRU00223"/>
    </source>
</evidence>
<evidence type="ECO:0000305" key="3"/>
<protein>
    <recommendedName>
        <fullName>Probable WRKY transcription factor 59</fullName>
    </recommendedName>
    <alternativeName>
        <fullName>WRKY DNA-binding protein 59</fullName>
    </alternativeName>
</protein>
<gene>
    <name type="primary">WRKY59</name>
    <name type="ordered locus">At2g21900</name>
    <name type="ORF">F7D8.22</name>
</gene>
<sequence>MNYPSNPNPSSTDFTEFFKFDDFDDTFEKIMEEIGREDHSSSPTLSWSSSEKLVAAEITSPLQTSLATSPMSFEIGDKDEIKKRKRHKEDPIIHVFKTKSSIDEKVALDDGYKWRKYGKKPITGSPFPRHYHKCSSPDCNVKKKIERDTNNPDYILTTYEGRHNHPSPSVVYCDSDDFDLNSLNNWSFQTANTYSFSHSAPY</sequence>
<organism>
    <name type="scientific">Arabidopsis thaliana</name>
    <name type="common">Mouse-ear cress</name>
    <dbReference type="NCBI Taxonomy" id="3702"/>
    <lineage>
        <taxon>Eukaryota</taxon>
        <taxon>Viridiplantae</taxon>
        <taxon>Streptophyta</taxon>
        <taxon>Embryophyta</taxon>
        <taxon>Tracheophyta</taxon>
        <taxon>Spermatophyta</taxon>
        <taxon>Magnoliopsida</taxon>
        <taxon>eudicotyledons</taxon>
        <taxon>Gunneridae</taxon>
        <taxon>Pentapetalae</taxon>
        <taxon>rosids</taxon>
        <taxon>malvids</taxon>
        <taxon>Brassicales</taxon>
        <taxon>Brassicaceae</taxon>
        <taxon>Camelineae</taxon>
        <taxon>Arabidopsis</taxon>
    </lineage>
</organism>
<accession>Q9SJ09</accession>
<accession>Q8VWV5</accession>
<proteinExistence type="evidence at transcript level"/>
<dbReference type="EMBL" id="AF452176">
    <property type="protein sequence ID" value="AAL50786.1"/>
    <property type="molecule type" value="mRNA"/>
</dbReference>
<dbReference type="EMBL" id="AC007019">
    <property type="protein sequence ID" value="AAD20407.1"/>
    <property type="status" value="ALT_SEQ"/>
    <property type="molecule type" value="Genomic_DNA"/>
</dbReference>
<dbReference type="EMBL" id="CP002685">
    <property type="protein sequence ID" value="AEC07236.1"/>
    <property type="molecule type" value="Genomic_DNA"/>
</dbReference>
<dbReference type="PIR" id="E84606">
    <property type="entry name" value="E84606"/>
</dbReference>
<dbReference type="RefSeq" id="NP_850019.1">
    <property type="nucleotide sequence ID" value="NM_179688.2"/>
</dbReference>
<dbReference type="SMR" id="Q9SJ09"/>
<dbReference type="BioGRID" id="2079">
    <property type="interactions" value="3"/>
</dbReference>
<dbReference type="IntAct" id="Q9SJ09">
    <property type="interactions" value="1"/>
</dbReference>
<dbReference type="STRING" id="3702.Q9SJ09"/>
<dbReference type="iPTMnet" id="Q9SJ09"/>
<dbReference type="PaxDb" id="3702-AT2G21900.1"/>
<dbReference type="ProteomicsDB" id="234418"/>
<dbReference type="EnsemblPlants" id="AT2G21900.1">
    <property type="protein sequence ID" value="AT2G21900.1"/>
    <property type="gene ID" value="AT2G21900"/>
</dbReference>
<dbReference type="GeneID" id="816726"/>
<dbReference type="Gramene" id="AT2G21900.1">
    <property type="protein sequence ID" value="AT2G21900.1"/>
    <property type="gene ID" value="AT2G21900"/>
</dbReference>
<dbReference type="KEGG" id="ath:AT2G21900"/>
<dbReference type="Araport" id="AT2G21900"/>
<dbReference type="TAIR" id="AT2G21900">
    <property type="gene designation" value="WRKY59"/>
</dbReference>
<dbReference type="eggNOG" id="ENOG502S01U">
    <property type="taxonomic scope" value="Eukaryota"/>
</dbReference>
<dbReference type="HOGENOM" id="CLU_073202_3_0_1"/>
<dbReference type="InParanoid" id="Q9SJ09"/>
<dbReference type="OMA" id="NTYSFSH"/>
<dbReference type="PhylomeDB" id="Q9SJ09"/>
<dbReference type="PRO" id="PR:Q9SJ09"/>
<dbReference type="Proteomes" id="UP000006548">
    <property type="component" value="Chromosome 2"/>
</dbReference>
<dbReference type="ExpressionAtlas" id="Q9SJ09">
    <property type="expression patterns" value="baseline and differential"/>
</dbReference>
<dbReference type="GO" id="GO:0005634">
    <property type="term" value="C:nucleus"/>
    <property type="evidence" value="ECO:0007669"/>
    <property type="project" value="UniProtKB-SubCell"/>
</dbReference>
<dbReference type="GO" id="GO:0003700">
    <property type="term" value="F:DNA-binding transcription factor activity"/>
    <property type="evidence" value="ECO:0000250"/>
    <property type="project" value="TAIR"/>
</dbReference>
<dbReference type="GO" id="GO:0043565">
    <property type="term" value="F:sequence-specific DNA binding"/>
    <property type="evidence" value="ECO:0007669"/>
    <property type="project" value="InterPro"/>
</dbReference>
<dbReference type="FunFam" id="2.20.25.80:FF:000003">
    <property type="entry name" value="WRKY transcription factor 57"/>
    <property type="match status" value="1"/>
</dbReference>
<dbReference type="Gene3D" id="2.20.25.80">
    <property type="entry name" value="WRKY domain"/>
    <property type="match status" value="1"/>
</dbReference>
<dbReference type="InterPro" id="IPR003657">
    <property type="entry name" value="WRKY_dom"/>
</dbReference>
<dbReference type="InterPro" id="IPR036576">
    <property type="entry name" value="WRKY_dom_sf"/>
</dbReference>
<dbReference type="InterPro" id="IPR044810">
    <property type="entry name" value="WRKY_plant"/>
</dbReference>
<dbReference type="PANTHER" id="PTHR31221:SF273">
    <property type="entry name" value="WRKY TRANSCRIPTION FACTOR 59-RELATED"/>
    <property type="match status" value="1"/>
</dbReference>
<dbReference type="PANTHER" id="PTHR31221">
    <property type="entry name" value="WRKY TRANSCRIPTION FACTOR PROTEIN 1-RELATED"/>
    <property type="match status" value="1"/>
</dbReference>
<dbReference type="Pfam" id="PF03106">
    <property type="entry name" value="WRKY"/>
    <property type="match status" value="1"/>
</dbReference>
<dbReference type="SMART" id="SM00774">
    <property type="entry name" value="WRKY"/>
    <property type="match status" value="1"/>
</dbReference>
<dbReference type="SUPFAM" id="SSF118290">
    <property type="entry name" value="WRKY DNA-binding domain"/>
    <property type="match status" value="1"/>
</dbReference>
<dbReference type="PROSITE" id="PS50811">
    <property type="entry name" value="WRKY"/>
    <property type="match status" value="1"/>
</dbReference>
<comment type="function">
    <text evidence="1">Transcription factor. Interacts specifically with the W box (5'-(T)TGAC[CT]-3'), a frequently occurring elicitor-responsive cis-acting element (By similarity).</text>
</comment>
<comment type="subcellular location">
    <subcellularLocation>
        <location evidence="3">Nucleus</location>
    </subcellularLocation>
</comment>
<comment type="similarity">
    <text evidence="3">Belongs to the WRKY group II-c family.</text>
</comment>
<comment type="sequence caution" evidence="3">
    <conflict type="erroneous gene model prediction">
        <sequence resource="EMBL-CDS" id="AAD20407"/>
    </conflict>
</comment>
<keyword id="KW-0238">DNA-binding</keyword>
<keyword id="KW-0539">Nucleus</keyword>
<keyword id="KW-1185">Reference proteome</keyword>
<keyword id="KW-0804">Transcription</keyword>
<keyword id="KW-0805">Transcription regulation</keyword>
<reference key="1">
    <citation type="submission" date="2001-11" db="EMBL/GenBank/DDBJ databases">
        <title>Arabidopsis thaliana transcription factor WRKY59.</title>
        <authorList>
            <person name="Kushnir S."/>
            <person name="Ulker B."/>
            <person name="Somssich I.E."/>
        </authorList>
    </citation>
    <scope>NUCLEOTIDE SEQUENCE [MRNA]</scope>
    <source>
        <strain>cv. C24</strain>
        <tissue>Flower</tissue>
    </source>
</reference>
<reference key="2">
    <citation type="journal article" date="1999" name="Nature">
        <title>Sequence and analysis of chromosome 2 of the plant Arabidopsis thaliana.</title>
        <authorList>
            <person name="Lin X."/>
            <person name="Kaul S."/>
            <person name="Rounsley S.D."/>
            <person name="Shea T.P."/>
            <person name="Benito M.-I."/>
            <person name="Town C.D."/>
            <person name="Fujii C.Y."/>
            <person name="Mason T.M."/>
            <person name="Bowman C.L."/>
            <person name="Barnstead M.E."/>
            <person name="Feldblyum T.V."/>
            <person name="Buell C.R."/>
            <person name="Ketchum K.A."/>
            <person name="Lee J.J."/>
            <person name="Ronning C.M."/>
            <person name="Koo H.L."/>
            <person name="Moffat K.S."/>
            <person name="Cronin L.A."/>
            <person name="Shen M."/>
            <person name="Pai G."/>
            <person name="Van Aken S."/>
            <person name="Umayam L."/>
            <person name="Tallon L.J."/>
            <person name="Gill J.E."/>
            <person name="Adams M.D."/>
            <person name="Carrera A.J."/>
            <person name="Creasy T.H."/>
            <person name="Goodman H.M."/>
            <person name="Somerville C.R."/>
            <person name="Copenhaver G.P."/>
            <person name="Preuss D."/>
            <person name="Nierman W.C."/>
            <person name="White O."/>
            <person name="Eisen J.A."/>
            <person name="Salzberg S.L."/>
            <person name="Fraser C.M."/>
            <person name="Venter J.C."/>
        </authorList>
    </citation>
    <scope>NUCLEOTIDE SEQUENCE [LARGE SCALE GENOMIC DNA]</scope>
    <source>
        <strain>cv. Columbia</strain>
    </source>
</reference>
<reference key="3">
    <citation type="journal article" date="2017" name="Plant J.">
        <title>Araport11: a complete reannotation of the Arabidopsis thaliana reference genome.</title>
        <authorList>
            <person name="Cheng C.Y."/>
            <person name="Krishnakumar V."/>
            <person name="Chan A.P."/>
            <person name="Thibaud-Nissen F."/>
            <person name="Schobel S."/>
            <person name="Town C.D."/>
        </authorList>
    </citation>
    <scope>GENOME REANNOTATION</scope>
    <source>
        <strain>cv. Columbia</strain>
    </source>
</reference>